<organism>
    <name type="scientific">Streptococcus suis (strain 98HAH33)</name>
    <dbReference type="NCBI Taxonomy" id="391296"/>
    <lineage>
        <taxon>Bacteria</taxon>
        <taxon>Bacillati</taxon>
        <taxon>Bacillota</taxon>
        <taxon>Bacilli</taxon>
        <taxon>Lactobacillales</taxon>
        <taxon>Streptococcaceae</taxon>
        <taxon>Streptococcus</taxon>
    </lineage>
</organism>
<protein>
    <recommendedName>
        <fullName evidence="1">UvrABC system protein B</fullName>
        <shortName evidence="1">Protein UvrB</shortName>
    </recommendedName>
    <alternativeName>
        <fullName evidence="1">Excinuclease ABC subunit B</fullName>
    </alternativeName>
</protein>
<dbReference type="EMBL" id="CP000408">
    <property type="protein sequence ID" value="ABP92196.1"/>
    <property type="molecule type" value="Genomic_DNA"/>
</dbReference>
<dbReference type="SMR" id="A4W1F7"/>
<dbReference type="KEGG" id="ssv:SSU98_1038"/>
<dbReference type="HOGENOM" id="CLU_009621_2_1_9"/>
<dbReference type="GO" id="GO:0005737">
    <property type="term" value="C:cytoplasm"/>
    <property type="evidence" value="ECO:0007669"/>
    <property type="project" value="UniProtKB-SubCell"/>
</dbReference>
<dbReference type="GO" id="GO:0009380">
    <property type="term" value="C:excinuclease repair complex"/>
    <property type="evidence" value="ECO:0007669"/>
    <property type="project" value="InterPro"/>
</dbReference>
<dbReference type="GO" id="GO:0005524">
    <property type="term" value="F:ATP binding"/>
    <property type="evidence" value="ECO:0007669"/>
    <property type="project" value="UniProtKB-UniRule"/>
</dbReference>
<dbReference type="GO" id="GO:0016887">
    <property type="term" value="F:ATP hydrolysis activity"/>
    <property type="evidence" value="ECO:0007669"/>
    <property type="project" value="InterPro"/>
</dbReference>
<dbReference type="GO" id="GO:0003677">
    <property type="term" value="F:DNA binding"/>
    <property type="evidence" value="ECO:0007669"/>
    <property type="project" value="UniProtKB-UniRule"/>
</dbReference>
<dbReference type="GO" id="GO:0009381">
    <property type="term" value="F:excinuclease ABC activity"/>
    <property type="evidence" value="ECO:0007669"/>
    <property type="project" value="UniProtKB-UniRule"/>
</dbReference>
<dbReference type="GO" id="GO:0004386">
    <property type="term" value="F:helicase activity"/>
    <property type="evidence" value="ECO:0007669"/>
    <property type="project" value="UniProtKB-KW"/>
</dbReference>
<dbReference type="GO" id="GO:0006289">
    <property type="term" value="P:nucleotide-excision repair"/>
    <property type="evidence" value="ECO:0007669"/>
    <property type="project" value="UniProtKB-UniRule"/>
</dbReference>
<dbReference type="GO" id="GO:0009432">
    <property type="term" value="P:SOS response"/>
    <property type="evidence" value="ECO:0007669"/>
    <property type="project" value="UniProtKB-UniRule"/>
</dbReference>
<dbReference type="CDD" id="cd17916">
    <property type="entry name" value="DEXHc_UvrB"/>
    <property type="match status" value="1"/>
</dbReference>
<dbReference type="CDD" id="cd18790">
    <property type="entry name" value="SF2_C_UvrB"/>
    <property type="match status" value="1"/>
</dbReference>
<dbReference type="Gene3D" id="3.40.50.300">
    <property type="entry name" value="P-loop containing nucleotide triphosphate hydrolases"/>
    <property type="match status" value="3"/>
</dbReference>
<dbReference type="Gene3D" id="4.10.860.10">
    <property type="entry name" value="UVR domain"/>
    <property type="match status" value="1"/>
</dbReference>
<dbReference type="HAMAP" id="MF_00204">
    <property type="entry name" value="UvrB"/>
    <property type="match status" value="1"/>
</dbReference>
<dbReference type="InterPro" id="IPR006935">
    <property type="entry name" value="Helicase/UvrB_N"/>
</dbReference>
<dbReference type="InterPro" id="IPR014001">
    <property type="entry name" value="Helicase_ATP-bd"/>
</dbReference>
<dbReference type="InterPro" id="IPR001650">
    <property type="entry name" value="Helicase_C-like"/>
</dbReference>
<dbReference type="InterPro" id="IPR027417">
    <property type="entry name" value="P-loop_NTPase"/>
</dbReference>
<dbReference type="InterPro" id="IPR001943">
    <property type="entry name" value="UVR_dom"/>
</dbReference>
<dbReference type="InterPro" id="IPR036876">
    <property type="entry name" value="UVR_dom_sf"/>
</dbReference>
<dbReference type="InterPro" id="IPR004807">
    <property type="entry name" value="UvrB"/>
</dbReference>
<dbReference type="InterPro" id="IPR041471">
    <property type="entry name" value="UvrB_inter"/>
</dbReference>
<dbReference type="InterPro" id="IPR024759">
    <property type="entry name" value="UvrB_YAD/RRR_dom"/>
</dbReference>
<dbReference type="NCBIfam" id="NF003673">
    <property type="entry name" value="PRK05298.1"/>
    <property type="match status" value="1"/>
</dbReference>
<dbReference type="NCBIfam" id="TIGR00631">
    <property type="entry name" value="uvrb"/>
    <property type="match status" value="1"/>
</dbReference>
<dbReference type="PANTHER" id="PTHR24029">
    <property type="entry name" value="UVRABC SYSTEM PROTEIN B"/>
    <property type="match status" value="1"/>
</dbReference>
<dbReference type="PANTHER" id="PTHR24029:SF0">
    <property type="entry name" value="UVRABC SYSTEM PROTEIN B"/>
    <property type="match status" value="1"/>
</dbReference>
<dbReference type="Pfam" id="PF00271">
    <property type="entry name" value="Helicase_C"/>
    <property type="match status" value="1"/>
</dbReference>
<dbReference type="Pfam" id="PF04851">
    <property type="entry name" value="ResIII"/>
    <property type="match status" value="1"/>
</dbReference>
<dbReference type="Pfam" id="PF02151">
    <property type="entry name" value="UVR"/>
    <property type="match status" value="1"/>
</dbReference>
<dbReference type="Pfam" id="PF12344">
    <property type="entry name" value="UvrB"/>
    <property type="match status" value="1"/>
</dbReference>
<dbReference type="Pfam" id="PF17757">
    <property type="entry name" value="UvrB_inter"/>
    <property type="match status" value="1"/>
</dbReference>
<dbReference type="SMART" id="SM00487">
    <property type="entry name" value="DEXDc"/>
    <property type="match status" value="1"/>
</dbReference>
<dbReference type="SMART" id="SM00490">
    <property type="entry name" value="HELICc"/>
    <property type="match status" value="1"/>
</dbReference>
<dbReference type="SUPFAM" id="SSF46600">
    <property type="entry name" value="C-terminal UvrC-binding domain of UvrB"/>
    <property type="match status" value="1"/>
</dbReference>
<dbReference type="SUPFAM" id="SSF52540">
    <property type="entry name" value="P-loop containing nucleoside triphosphate hydrolases"/>
    <property type="match status" value="2"/>
</dbReference>
<dbReference type="PROSITE" id="PS51192">
    <property type="entry name" value="HELICASE_ATP_BIND_1"/>
    <property type="match status" value="1"/>
</dbReference>
<dbReference type="PROSITE" id="PS51194">
    <property type="entry name" value="HELICASE_CTER"/>
    <property type="match status" value="1"/>
</dbReference>
<dbReference type="PROSITE" id="PS50151">
    <property type="entry name" value="UVR"/>
    <property type="match status" value="1"/>
</dbReference>
<keyword id="KW-0067">ATP-binding</keyword>
<keyword id="KW-0963">Cytoplasm</keyword>
<keyword id="KW-0227">DNA damage</keyword>
<keyword id="KW-0228">DNA excision</keyword>
<keyword id="KW-0234">DNA repair</keyword>
<keyword id="KW-0267">Excision nuclease</keyword>
<keyword id="KW-0347">Helicase</keyword>
<keyword id="KW-0378">Hydrolase</keyword>
<keyword id="KW-0547">Nucleotide-binding</keyword>
<keyword id="KW-0742">SOS response</keyword>
<name>UVRB_STRS2</name>
<proteinExistence type="inferred from homology"/>
<reference key="1">
    <citation type="journal article" date="2007" name="PLoS ONE">
        <title>A glimpse of streptococcal toxic shock syndrome from comparative genomics of S. suis 2 Chinese isolates.</title>
        <authorList>
            <person name="Chen C."/>
            <person name="Tang J."/>
            <person name="Dong W."/>
            <person name="Wang C."/>
            <person name="Feng Y."/>
            <person name="Wang J."/>
            <person name="Zheng F."/>
            <person name="Pan X."/>
            <person name="Liu D."/>
            <person name="Li M."/>
            <person name="Song Y."/>
            <person name="Zhu X."/>
            <person name="Sun H."/>
            <person name="Feng T."/>
            <person name="Guo Z."/>
            <person name="Ju A."/>
            <person name="Ge J."/>
            <person name="Dong Y."/>
            <person name="Sun W."/>
            <person name="Jiang Y."/>
            <person name="Wang J."/>
            <person name="Yan J."/>
            <person name="Yang H."/>
            <person name="Wang X."/>
            <person name="Gao G.F."/>
            <person name="Yang R."/>
            <person name="Wang J."/>
            <person name="Yu J."/>
        </authorList>
    </citation>
    <scope>NUCLEOTIDE SEQUENCE [LARGE SCALE GENOMIC DNA]</scope>
    <source>
        <strain>98HAH33</strain>
    </source>
</reference>
<gene>
    <name evidence="1" type="primary">uvrB</name>
    <name type="ordered locus">SSU98_1038</name>
</gene>
<feature type="chain" id="PRO_1000077931" description="UvrABC system protein B">
    <location>
        <begin position="1"/>
        <end position="661"/>
    </location>
</feature>
<feature type="domain" description="Helicase ATP-binding" evidence="1">
    <location>
        <begin position="31"/>
        <end position="186"/>
    </location>
</feature>
<feature type="domain" description="Helicase C-terminal" evidence="1">
    <location>
        <begin position="435"/>
        <end position="601"/>
    </location>
</feature>
<feature type="domain" description="UVR" evidence="1">
    <location>
        <begin position="626"/>
        <end position="661"/>
    </location>
</feature>
<feature type="short sequence motif" description="Beta-hairpin">
    <location>
        <begin position="97"/>
        <end position="120"/>
    </location>
</feature>
<feature type="binding site" evidence="1">
    <location>
        <begin position="44"/>
        <end position="51"/>
    </location>
    <ligand>
        <name>ATP</name>
        <dbReference type="ChEBI" id="CHEBI:30616"/>
    </ligand>
</feature>
<comment type="function">
    <text evidence="1">The UvrABC repair system catalyzes the recognition and processing of DNA lesions. A damage recognition complex composed of 2 UvrA and 2 UvrB subunits scans DNA for abnormalities. Upon binding of the UvrA(2)B(2) complex to a putative damaged site, the DNA wraps around one UvrB monomer. DNA wrap is dependent on ATP binding by UvrB and probably causes local melting of the DNA helix, facilitating insertion of UvrB beta-hairpin between the DNA strands. Then UvrB probes one DNA strand for the presence of a lesion. If a lesion is found the UvrA subunits dissociate and the UvrB-DNA preincision complex is formed. This complex is subsequently bound by UvrC and the second UvrB is released. If no lesion is found, the DNA wraps around the other UvrB subunit that will check the other stand for damage.</text>
</comment>
<comment type="subunit">
    <text evidence="1">Forms a heterotetramer with UvrA during the search for lesions. Interacts with UvrC in an incision complex.</text>
</comment>
<comment type="subcellular location">
    <subcellularLocation>
        <location evidence="1">Cytoplasm</location>
    </subcellularLocation>
</comment>
<comment type="domain">
    <text evidence="1">The beta-hairpin motif is involved in DNA binding.</text>
</comment>
<comment type="similarity">
    <text evidence="1">Belongs to the UvrB family.</text>
</comment>
<accession>A4W1F7</accession>
<sequence>MINRNTENQFKLVSKYAPSGDQPQAIETLVDNIEGGEKAQILMGATGTGKTYTMSQVIARVNKPTLVIAHNKTLAGQLYSEFKEFFPENAVEYFVSYYDYYQPEAYVPSSDTYIEKDSSVNDEIDKLRHSATSALLERNDVIVVASVSCIYGLGSPKEYSDSVVSLRPGQEISRDQLLNALVDIQFERNDIDFQRGRFRVRGDVVEIFPASRDEHAFRVEFFGDEIDRIREIESLTGKVLGDVDHLAIFPATHFVTNDDHMETAIAKIQAELEEQLKVFEAEGKLLEAQRLKQRTDYDIEMLREMGYTNGVENYSRHMDGRSEGEPPYTLLDFFPEDYLIMIDESHMTMGQIKGMYNGDRSRKEMLVNYGFRLPSALDNRPLRREEFESHVHQIVYVSATPGDYEMEQTETVVEQIIRPTGLLDPEVEVRPTMGQMDDLLGEINARVEKGERTFITTLTKKMAEDLTDYLKEMGVKVKYMHSDIKTLERTEIIRDLRLGVFDVLIGINLLREGIDVPEVSLVAILDADKEGFLRNERGLIQTIGRAARNSEGHVIMYADKVTESMRKAMEETARRRQIQMAYNEEHGIIPQTIKKEIRDLISVTKAVTQDKEEVVDFNALNKDERKAMIKKLEGQMQEAAEVLDFELAAQIRDMVIELKNM</sequence>
<evidence type="ECO:0000255" key="1">
    <source>
        <dbReference type="HAMAP-Rule" id="MF_00204"/>
    </source>
</evidence>